<gene>
    <name evidence="1" type="primary">hisI</name>
    <name type="ordered locus">cgR_1977</name>
</gene>
<reference key="1">
    <citation type="journal article" date="2007" name="Microbiology">
        <title>Comparative analysis of the Corynebacterium glutamicum group and complete genome sequence of strain R.</title>
        <authorList>
            <person name="Yukawa H."/>
            <person name="Omumasaba C.A."/>
            <person name="Nonaka H."/>
            <person name="Kos P."/>
            <person name="Okai N."/>
            <person name="Suzuki N."/>
            <person name="Suda M."/>
            <person name="Tsuge Y."/>
            <person name="Watanabe J."/>
            <person name="Ikeda Y."/>
            <person name="Vertes A.A."/>
            <person name="Inui M."/>
        </authorList>
    </citation>
    <scope>NUCLEOTIDE SEQUENCE [LARGE SCALE GENOMIC DNA]</scope>
    <source>
        <strain>R</strain>
    </source>
</reference>
<comment type="function">
    <text evidence="1">Catalyzes the hydrolysis of the adenine ring of phosphoribosyl-AMP.</text>
</comment>
<comment type="catalytic activity">
    <reaction evidence="1">
        <text>1-(5-phospho-beta-D-ribosyl)-5'-AMP + H2O = 1-(5-phospho-beta-D-ribosyl)-5-[(5-phospho-beta-D-ribosylamino)methylideneamino]imidazole-4-carboxamide</text>
        <dbReference type="Rhea" id="RHEA:20049"/>
        <dbReference type="ChEBI" id="CHEBI:15377"/>
        <dbReference type="ChEBI" id="CHEBI:58435"/>
        <dbReference type="ChEBI" id="CHEBI:59457"/>
        <dbReference type="EC" id="3.5.4.19"/>
    </reaction>
</comment>
<comment type="cofactor">
    <cofactor evidence="1">
        <name>Mg(2+)</name>
        <dbReference type="ChEBI" id="CHEBI:18420"/>
    </cofactor>
    <text evidence="1">Binds 1 Mg(2+) ion per subunit.</text>
</comment>
<comment type="cofactor">
    <cofactor evidence="1">
        <name>Zn(2+)</name>
        <dbReference type="ChEBI" id="CHEBI:29105"/>
    </cofactor>
    <text evidence="1">Binds 1 zinc ion per subunit.</text>
</comment>
<comment type="pathway">
    <text evidence="1">Amino-acid biosynthesis; L-histidine biosynthesis; L-histidine from 5-phospho-alpha-D-ribose 1-diphosphate: step 3/9.</text>
</comment>
<comment type="subunit">
    <text evidence="1">Homodimer.</text>
</comment>
<comment type="subcellular location">
    <subcellularLocation>
        <location evidence="1">Cytoplasm</location>
    </subcellularLocation>
</comment>
<comment type="similarity">
    <text evidence="1">Belongs to the PRA-CH family.</text>
</comment>
<evidence type="ECO:0000255" key="1">
    <source>
        <dbReference type="HAMAP-Rule" id="MF_01021"/>
    </source>
</evidence>
<sequence>MSDNPQEYELDWDVEKRLKLNDAGLVPAIVQADGTNEVLMMAWMDTHALAYTLATRRGTYFSRSRNEYWIKGLTSGNVQEVTGVALDCDGDTVLLTVKQTGGACHTGAHTCFDNDVLL</sequence>
<proteinExistence type="inferred from homology"/>
<feature type="chain" id="PRO_1000063403" description="Phosphoribosyl-AMP cyclohydrolase">
    <location>
        <begin position="1"/>
        <end position="118"/>
    </location>
</feature>
<feature type="binding site" evidence="1">
    <location>
        <position position="87"/>
    </location>
    <ligand>
        <name>Mg(2+)</name>
        <dbReference type="ChEBI" id="CHEBI:18420"/>
    </ligand>
</feature>
<feature type="binding site" evidence="1">
    <location>
        <position position="88"/>
    </location>
    <ligand>
        <name>Zn(2+)</name>
        <dbReference type="ChEBI" id="CHEBI:29105"/>
        <note>ligand shared between dimeric partners</note>
    </ligand>
</feature>
<feature type="binding site" evidence="1">
    <location>
        <position position="89"/>
    </location>
    <ligand>
        <name>Mg(2+)</name>
        <dbReference type="ChEBI" id="CHEBI:18420"/>
    </ligand>
</feature>
<feature type="binding site" evidence="1">
    <location>
        <position position="91"/>
    </location>
    <ligand>
        <name>Mg(2+)</name>
        <dbReference type="ChEBI" id="CHEBI:18420"/>
    </ligand>
</feature>
<feature type="binding site" evidence="1">
    <location>
        <position position="104"/>
    </location>
    <ligand>
        <name>Zn(2+)</name>
        <dbReference type="ChEBI" id="CHEBI:29105"/>
        <note>ligand shared between dimeric partners</note>
    </ligand>
</feature>
<feature type="binding site" evidence="1">
    <location>
        <position position="111"/>
    </location>
    <ligand>
        <name>Zn(2+)</name>
        <dbReference type="ChEBI" id="CHEBI:29105"/>
        <note>ligand shared between dimeric partners</note>
    </ligand>
</feature>
<organism>
    <name type="scientific">Corynebacterium glutamicum (strain R)</name>
    <dbReference type="NCBI Taxonomy" id="340322"/>
    <lineage>
        <taxon>Bacteria</taxon>
        <taxon>Bacillati</taxon>
        <taxon>Actinomycetota</taxon>
        <taxon>Actinomycetes</taxon>
        <taxon>Mycobacteriales</taxon>
        <taxon>Corynebacteriaceae</taxon>
        <taxon>Corynebacterium</taxon>
    </lineage>
</organism>
<dbReference type="EC" id="3.5.4.19" evidence="1"/>
<dbReference type="EMBL" id="AP009044">
    <property type="protein sequence ID" value="BAF54974.1"/>
    <property type="molecule type" value="Genomic_DNA"/>
</dbReference>
<dbReference type="RefSeq" id="WP_003856410.1">
    <property type="nucleotide sequence ID" value="NC_009342.1"/>
</dbReference>
<dbReference type="SMR" id="A4QFF8"/>
<dbReference type="KEGG" id="cgt:cgR_1977"/>
<dbReference type="HOGENOM" id="CLU_048577_5_1_11"/>
<dbReference type="PhylomeDB" id="A4QFF8"/>
<dbReference type="UniPathway" id="UPA00031">
    <property type="reaction ID" value="UER00008"/>
</dbReference>
<dbReference type="Proteomes" id="UP000006698">
    <property type="component" value="Chromosome"/>
</dbReference>
<dbReference type="GO" id="GO:0005737">
    <property type="term" value="C:cytoplasm"/>
    <property type="evidence" value="ECO:0007669"/>
    <property type="project" value="UniProtKB-SubCell"/>
</dbReference>
<dbReference type="GO" id="GO:0000287">
    <property type="term" value="F:magnesium ion binding"/>
    <property type="evidence" value="ECO:0007669"/>
    <property type="project" value="UniProtKB-UniRule"/>
</dbReference>
<dbReference type="GO" id="GO:0004635">
    <property type="term" value="F:phosphoribosyl-AMP cyclohydrolase activity"/>
    <property type="evidence" value="ECO:0007669"/>
    <property type="project" value="UniProtKB-UniRule"/>
</dbReference>
<dbReference type="GO" id="GO:0008270">
    <property type="term" value="F:zinc ion binding"/>
    <property type="evidence" value="ECO:0007669"/>
    <property type="project" value="UniProtKB-UniRule"/>
</dbReference>
<dbReference type="GO" id="GO:0000105">
    <property type="term" value="P:L-histidine biosynthetic process"/>
    <property type="evidence" value="ECO:0007669"/>
    <property type="project" value="UniProtKB-UniRule"/>
</dbReference>
<dbReference type="FunFam" id="3.10.20.810:FF:000001">
    <property type="entry name" value="Histidine biosynthesis bifunctional protein HisIE"/>
    <property type="match status" value="1"/>
</dbReference>
<dbReference type="Gene3D" id="3.10.20.810">
    <property type="entry name" value="Phosphoribosyl-AMP cyclohydrolase"/>
    <property type="match status" value="1"/>
</dbReference>
<dbReference type="HAMAP" id="MF_01021">
    <property type="entry name" value="HisI"/>
    <property type="match status" value="1"/>
</dbReference>
<dbReference type="InterPro" id="IPR026660">
    <property type="entry name" value="PRA-CH"/>
</dbReference>
<dbReference type="InterPro" id="IPR002496">
    <property type="entry name" value="PRib_AMP_CycHydrolase_dom"/>
</dbReference>
<dbReference type="InterPro" id="IPR038019">
    <property type="entry name" value="PRib_AMP_CycHydrolase_sf"/>
</dbReference>
<dbReference type="NCBIfam" id="NF000768">
    <property type="entry name" value="PRK00051.1"/>
    <property type="match status" value="1"/>
</dbReference>
<dbReference type="PANTHER" id="PTHR42945">
    <property type="entry name" value="HISTIDINE BIOSYNTHESIS BIFUNCTIONAL PROTEIN"/>
    <property type="match status" value="1"/>
</dbReference>
<dbReference type="PANTHER" id="PTHR42945:SF11">
    <property type="entry name" value="PHOSPHORIBOSYL-AMP CYCLOHYDROLASE"/>
    <property type="match status" value="1"/>
</dbReference>
<dbReference type="Pfam" id="PF01502">
    <property type="entry name" value="PRA-CH"/>
    <property type="match status" value="1"/>
</dbReference>
<dbReference type="SUPFAM" id="SSF141734">
    <property type="entry name" value="HisI-like"/>
    <property type="match status" value="1"/>
</dbReference>
<protein>
    <recommendedName>
        <fullName evidence="1">Phosphoribosyl-AMP cyclohydrolase</fullName>
        <shortName evidence="1">PRA-CH</shortName>
        <ecNumber evidence="1">3.5.4.19</ecNumber>
    </recommendedName>
</protein>
<name>HIS3_CORGB</name>
<accession>A4QFF8</accession>
<keyword id="KW-0028">Amino-acid biosynthesis</keyword>
<keyword id="KW-0963">Cytoplasm</keyword>
<keyword id="KW-0368">Histidine biosynthesis</keyword>
<keyword id="KW-0378">Hydrolase</keyword>
<keyword id="KW-0460">Magnesium</keyword>
<keyword id="KW-0479">Metal-binding</keyword>
<keyword id="KW-0862">Zinc</keyword>